<dbReference type="EC" id="3.6.5.n1" evidence="1"/>
<dbReference type="EMBL" id="CP000425">
    <property type="protein sequence ID" value="ABJ72742.1"/>
    <property type="molecule type" value="Genomic_DNA"/>
</dbReference>
<dbReference type="RefSeq" id="WP_011676115.1">
    <property type="nucleotide sequence ID" value="NC_008527.1"/>
</dbReference>
<dbReference type="SMR" id="Q02Z80"/>
<dbReference type="KEGG" id="llc:LACR_1210"/>
<dbReference type="HOGENOM" id="CLU_009995_3_3_9"/>
<dbReference type="Proteomes" id="UP000000240">
    <property type="component" value="Chromosome"/>
</dbReference>
<dbReference type="GO" id="GO:0005886">
    <property type="term" value="C:plasma membrane"/>
    <property type="evidence" value="ECO:0007669"/>
    <property type="project" value="UniProtKB-SubCell"/>
</dbReference>
<dbReference type="GO" id="GO:0005525">
    <property type="term" value="F:GTP binding"/>
    <property type="evidence" value="ECO:0007669"/>
    <property type="project" value="UniProtKB-UniRule"/>
</dbReference>
<dbReference type="GO" id="GO:0003924">
    <property type="term" value="F:GTPase activity"/>
    <property type="evidence" value="ECO:0007669"/>
    <property type="project" value="UniProtKB-UniRule"/>
</dbReference>
<dbReference type="GO" id="GO:0043022">
    <property type="term" value="F:ribosome binding"/>
    <property type="evidence" value="ECO:0007669"/>
    <property type="project" value="UniProtKB-UniRule"/>
</dbReference>
<dbReference type="GO" id="GO:0003746">
    <property type="term" value="F:translation elongation factor activity"/>
    <property type="evidence" value="ECO:0007669"/>
    <property type="project" value="UniProtKB-UniRule"/>
</dbReference>
<dbReference type="GO" id="GO:0045727">
    <property type="term" value="P:positive regulation of translation"/>
    <property type="evidence" value="ECO:0007669"/>
    <property type="project" value="UniProtKB-UniRule"/>
</dbReference>
<dbReference type="CDD" id="cd03699">
    <property type="entry name" value="EF4_II"/>
    <property type="match status" value="1"/>
</dbReference>
<dbReference type="CDD" id="cd16260">
    <property type="entry name" value="EF4_III"/>
    <property type="match status" value="1"/>
</dbReference>
<dbReference type="CDD" id="cd01890">
    <property type="entry name" value="LepA"/>
    <property type="match status" value="1"/>
</dbReference>
<dbReference type="CDD" id="cd03709">
    <property type="entry name" value="lepA_C"/>
    <property type="match status" value="1"/>
</dbReference>
<dbReference type="FunFam" id="3.40.50.300:FF:000078">
    <property type="entry name" value="Elongation factor 4"/>
    <property type="match status" value="1"/>
</dbReference>
<dbReference type="FunFam" id="2.40.30.10:FF:000015">
    <property type="entry name" value="Translation factor GUF1, mitochondrial"/>
    <property type="match status" value="1"/>
</dbReference>
<dbReference type="FunFam" id="3.30.70.240:FF:000007">
    <property type="entry name" value="Translation factor GUF1, mitochondrial"/>
    <property type="match status" value="1"/>
</dbReference>
<dbReference type="FunFam" id="3.30.70.2570:FF:000001">
    <property type="entry name" value="Translation factor GUF1, mitochondrial"/>
    <property type="match status" value="1"/>
</dbReference>
<dbReference type="FunFam" id="3.30.70.870:FF:000004">
    <property type="entry name" value="Translation factor GUF1, mitochondrial"/>
    <property type="match status" value="1"/>
</dbReference>
<dbReference type="Gene3D" id="3.30.70.240">
    <property type="match status" value="1"/>
</dbReference>
<dbReference type="Gene3D" id="3.30.70.2570">
    <property type="entry name" value="Elongation factor 4, C-terminal domain"/>
    <property type="match status" value="1"/>
</dbReference>
<dbReference type="Gene3D" id="3.30.70.870">
    <property type="entry name" value="Elongation Factor G (Translational Gtpase), domain 3"/>
    <property type="match status" value="1"/>
</dbReference>
<dbReference type="Gene3D" id="3.40.50.300">
    <property type="entry name" value="P-loop containing nucleotide triphosphate hydrolases"/>
    <property type="match status" value="1"/>
</dbReference>
<dbReference type="Gene3D" id="2.40.30.10">
    <property type="entry name" value="Translation factors"/>
    <property type="match status" value="1"/>
</dbReference>
<dbReference type="HAMAP" id="MF_00071">
    <property type="entry name" value="LepA"/>
    <property type="match status" value="1"/>
</dbReference>
<dbReference type="InterPro" id="IPR006297">
    <property type="entry name" value="EF-4"/>
</dbReference>
<dbReference type="InterPro" id="IPR041095">
    <property type="entry name" value="EFG_II"/>
</dbReference>
<dbReference type="InterPro" id="IPR035647">
    <property type="entry name" value="EFG_III/V"/>
</dbReference>
<dbReference type="InterPro" id="IPR000640">
    <property type="entry name" value="EFG_V-like"/>
</dbReference>
<dbReference type="InterPro" id="IPR004161">
    <property type="entry name" value="EFTu-like_2"/>
</dbReference>
<dbReference type="InterPro" id="IPR031157">
    <property type="entry name" value="G_TR_CS"/>
</dbReference>
<dbReference type="InterPro" id="IPR038363">
    <property type="entry name" value="LepA_C_sf"/>
</dbReference>
<dbReference type="InterPro" id="IPR013842">
    <property type="entry name" value="LepA_CTD"/>
</dbReference>
<dbReference type="InterPro" id="IPR035654">
    <property type="entry name" value="LepA_IV"/>
</dbReference>
<dbReference type="InterPro" id="IPR027417">
    <property type="entry name" value="P-loop_NTPase"/>
</dbReference>
<dbReference type="InterPro" id="IPR005225">
    <property type="entry name" value="Small_GTP-bd"/>
</dbReference>
<dbReference type="InterPro" id="IPR000795">
    <property type="entry name" value="T_Tr_GTP-bd_dom"/>
</dbReference>
<dbReference type="InterPro" id="IPR009000">
    <property type="entry name" value="Transl_B-barrel_sf"/>
</dbReference>
<dbReference type="NCBIfam" id="TIGR01393">
    <property type="entry name" value="lepA"/>
    <property type="match status" value="1"/>
</dbReference>
<dbReference type="NCBIfam" id="TIGR00231">
    <property type="entry name" value="small_GTP"/>
    <property type="match status" value="1"/>
</dbReference>
<dbReference type="PANTHER" id="PTHR43512:SF4">
    <property type="entry name" value="TRANSLATION FACTOR GUF1 HOMOLOG, CHLOROPLASTIC"/>
    <property type="match status" value="1"/>
</dbReference>
<dbReference type="PANTHER" id="PTHR43512">
    <property type="entry name" value="TRANSLATION FACTOR GUF1-RELATED"/>
    <property type="match status" value="1"/>
</dbReference>
<dbReference type="Pfam" id="PF00679">
    <property type="entry name" value="EFG_C"/>
    <property type="match status" value="1"/>
</dbReference>
<dbReference type="Pfam" id="PF14492">
    <property type="entry name" value="EFG_III"/>
    <property type="match status" value="1"/>
</dbReference>
<dbReference type="Pfam" id="PF00009">
    <property type="entry name" value="GTP_EFTU"/>
    <property type="match status" value="1"/>
</dbReference>
<dbReference type="Pfam" id="PF03144">
    <property type="entry name" value="GTP_EFTU_D2"/>
    <property type="match status" value="1"/>
</dbReference>
<dbReference type="Pfam" id="PF06421">
    <property type="entry name" value="LepA_C"/>
    <property type="match status" value="1"/>
</dbReference>
<dbReference type="PRINTS" id="PR00315">
    <property type="entry name" value="ELONGATNFCT"/>
</dbReference>
<dbReference type="SMART" id="SM00838">
    <property type="entry name" value="EFG_C"/>
    <property type="match status" value="1"/>
</dbReference>
<dbReference type="SUPFAM" id="SSF54980">
    <property type="entry name" value="EF-G C-terminal domain-like"/>
    <property type="match status" value="2"/>
</dbReference>
<dbReference type="SUPFAM" id="SSF52540">
    <property type="entry name" value="P-loop containing nucleoside triphosphate hydrolases"/>
    <property type="match status" value="1"/>
</dbReference>
<dbReference type="SUPFAM" id="SSF50447">
    <property type="entry name" value="Translation proteins"/>
    <property type="match status" value="1"/>
</dbReference>
<dbReference type="PROSITE" id="PS00301">
    <property type="entry name" value="G_TR_1"/>
    <property type="match status" value="1"/>
</dbReference>
<dbReference type="PROSITE" id="PS51722">
    <property type="entry name" value="G_TR_2"/>
    <property type="match status" value="1"/>
</dbReference>
<protein>
    <recommendedName>
        <fullName evidence="1">Elongation factor 4</fullName>
        <shortName evidence="1">EF-4</shortName>
        <ecNumber evidence="1">3.6.5.n1</ecNumber>
    </recommendedName>
    <alternativeName>
        <fullName evidence="1">Ribosomal back-translocase LepA</fullName>
    </alternativeName>
</protein>
<proteinExistence type="inferred from homology"/>
<keyword id="KW-1003">Cell membrane</keyword>
<keyword id="KW-0342">GTP-binding</keyword>
<keyword id="KW-0378">Hydrolase</keyword>
<keyword id="KW-0472">Membrane</keyword>
<keyword id="KW-0547">Nucleotide-binding</keyword>
<keyword id="KW-0648">Protein biosynthesis</keyword>
<comment type="function">
    <text evidence="1">Required for accurate and efficient protein synthesis under certain stress conditions. May act as a fidelity factor of the translation reaction, by catalyzing a one-codon backward translocation of tRNAs on improperly translocated ribosomes. Back-translocation proceeds from a post-translocation (POST) complex to a pre-translocation (PRE) complex, thus giving elongation factor G a second chance to translocate the tRNAs correctly. Binds to ribosomes in a GTP-dependent manner.</text>
</comment>
<comment type="catalytic activity">
    <reaction evidence="1">
        <text>GTP + H2O = GDP + phosphate + H(+)</text>
        <dbReference type="Rhea" id="RHEA:19669"/>
        <dbReference type="ChEBI" id="CHEBI:15377"/>
        <dbReference type="ChEBI" id="CHEBI:15378"/>
        <dbReference type="ChEBI" id="CHEBI:37565"/>
        <dbReference type="ChEBI" id="CHEBI:43474"/>
        <dbReference type="ChEBI" id="CHEBI:58189"/>
        <dbReference type="EC" id="3.6.5.n1"/>
    </reaction>
</comment>
<comment type="subcellular location">
    <subcellularLocation>
        <location evidence="1">Cell membrane</location>
        <topology evidence="1">Peripheral membrane protein</topology>
        <orientation evidence="1">Cytoplasmic side</orientation>
    </subcellularLocation>
</comment>
<comment type="similarity">
    <text evidence="1">Belongs to the TRAFAC class translation factor GTPase superfamily. Classic translation factor GTPase family. LepA subfamily.</text>
</comment>
<gene>
    <name evidence="1" type="primary">lepA</name>
    <name type="ordered locus">LACR_1210</name>
</gene>
<evidence type="ECO:0000255" key="1">
    <source>
        <dbReference type="HAMAP-Rule" id="MF_00071"/>
    </source>
</evidence>
<organism>
    <name type="scientific">Lactococcus lactis subsp. cremoris (strain SK11)</name>
    <dbReference type="NCBI Taxonomy" id="272622"/>
    <lineage>
        <taxon>Bacteria</taxon>
        <taxon>Bacillati</taxon>
        <taxon>Bacillota</taxon>
        <taxon>Bacilli</taxon>
        <taxon>Lactobacillales</taxon>
        <taxon>Streptococcaceae</taxon>
        <taxon>Lactococcus</taxon>
        <taxon>Lactococcus cremoris subsp. cremoris</taxon>
    </lineage>
</organism>
<sequence>MNLQEMNARKEKIRNFSIIAHIDHGKSTLADRILEQTETVSKREMQAQLLDSMDLERERGITIKLNAIELNYKAKDGETYIFHLIDTPGHVDFTYEVSRSLAACEGAILVVDAAQGIEAQTLANVYLALDNDLEILPVINKIDLPAADPEMVRQEIEDVIGLDASEAVLASAKAGIGIEEILEQIVEKVPAPQGEVDAPLKALIFDSVYDAYRGVILQIRVIDGSVKVGDRIQLMSNGKEFDVTEVGIFTPKAVARDFLMAGDVGYVAAAIKTVADTRVGDTVTLASNPATEALEGYKEMNPMVFAGIYPIESNKFNDLREALEKLQLNDASLRFEPETSQALGFGFRCGFLGLLHMDVIQERLEREFGIDLIMTAPSVVYHINTTDGETLEVANPSEFPDPTRIENIEEPFVKAQIMVPNDFVGPVMELAQRKRGIFLTMDYLDANRVNIIYHIPLSEIVFDFFDKLKSSTKGYASFDYEISDYRPSNLVKMDILLNAEKVDALSFIVHKDFAFERGKVIVEKLKKLIPRQQFEVPIQATIGNKIVARSDIKALRKNVLAKCYGGDISRKRKLLEKQKAGKKRMKAIGSVEVPQEAFLSVLSMDEE</sequence>
<accession>Q02Z80</accession>
<feature type="chain" id="PRO_1000032013" description="Elongation factor 4">
    <location>
        <begin position="1"/>
        <end position="607"/>
    </location>
</feature>
<feature type="domain" description="tr-type G">
    <location>
        <begin position="11"/>
        <end position="193"/>
    </location>
</feature>
<feature type="binding site" evidence="1">
    <location>
        <begin position="23"/>
        <end position="28"/>
    </location>
    <ligand>
        <name>GTP</name>
        <dbReference type="ChEBI" id="CHEBI:37565"/>
    </ligand>
</feature>
<feature type="binding site" evidence="1">
    <location>
        <begin position="140"/>
        <end position="143"/>
    </location>
    <ligand>
        <name>GTP</name>
        <dbReference type="ChEBI" id="CHEBI:37565"/>
    </ligand>
</feature>
<reference key="1">
    <citation type="journal article" date="2006" name="Proc. Natl. Acad. Sci. U.S.A.">
        <title>Comparative genomics of the lactic acid bacteria.</title>
        <authorList>
            <person name="Makarova K.S."/>
            <person name="Slesarev A."/>
            <person name="Wolf Y.I."/>
            <person name="Sorokin A."/>
            <person name="Mirkin B."/>
            <person name="Koonin E.V."/>
            <person name="Pavlov A."/>
            <person name="Pavlova N."/>
            <person name="Karamychev V."/>
            <person name="Polouchine N."/>
            <person name="Shakhova V."/>
            <person name="Grigoriev I."/>
            <person name="Lou Y."/>
            <person name="Rohksar D."/>
            <person name="Lucas S."/>
            <person name="Huang K."/>
            <person name="Goodstein D.M."/>
            <person name="Hawkins T."/>
            <person name="Plengvidhya V."/>
            <person name="Welker D."/>
            <person name="Hughes J."/>
            <person name="Goh Y."/>
            <person name="Benson A."/>
            <person name="Baldwin K."/>
            <person name="Lee J.-H."/>
            <person name="Diaz-Muniz I."/>
            <person name="Dosti B."/>
            <person name="Smeianov V."/>
            <person name="Wechter W."/>
            <person name="Barabote R."/>
            <person name="Lorca G."/>
            <person name="Altermann E."/>
            <person name="Barrangou R."/>
            <person name="Ganesan B."/>
            <person name="Xie Y."/>
            <person name="Rawsthorne H."/>
            <person name="Tamir D."/>
            <person name="Parker C."/>
            <person name="Breidt F."/>
            <person name="Broadbent J.R."/>
            <person name="Hutkins R."/>
            <person name="O'Sullivan D."/>
            <person name="Steele J."/>
            <person name="Unlu G."/>
            <person name="Saier M.H. Jr."/>
            <person name="Klaenhammer T."/>
            <person name="Richardson P."/>
            <person name="Kozyavkin S."/>
            <person name="Weimer B.C."/>
            <person name="Mills D.A."/>
        </authorList>
    </citation>
    <scope>NUCLEOTIDE SEQUENCE [LARGE SCALE GENOMIC DNA]</scope>
    <source>
        <strain>SK11</strain>
    </source>
</reference>
<name>LEPA_LACLS</name>